<organism>
    <name type="scientific">Aromatoleum aromaticum (strain DSM 19018 / LMG 30748 / EbN1)</name>
    <name type="common">Azoarcus sp. (strain EbN1)</name>
    <dbReference type="NCBI Taxonomy" id="76114"/>
    <lineage>
        <taxon>Bacteria</taxon>
        <taxon>Pseudomonadati</taxon>
        <taxon>Pseudomonadota</taxon>
        <taxon>Betaproteobacteria</taxon>
        <taxon>Rhodocyclales</taxon>
        <taxon>Rhodocyclaceae</taxon>
        <taxon>Aromatoleum</taxon>
    </lineage>
</organism>
<evidence type="ECO:0000255" key="1">
    <source>
        <dbReference type="HAMAP-Rule" id="MF_00203"/>
    </source>
</evidence>
<name>UVRC_AROAE</name>
<keyword id="KW-0963">Cytoplasm</keyword>
<keyword id="KW-0227">DNA damage</keyword>
<keyword id="KW-0228">DNA excision</keyword>
<keyword id="KW-0234">DNA repair</keyword>
<keyword id="KW-0267">Excision nuclease</keyword>
<keyword id="KW-1185">Reference proteome</keyword>
<keyword id="KW-0742">SOS response</keyword>
<gene>
    <name evidence="1" type="primary">uvrC</name>
    <name type="ordered locus">AZOSEA31590</name>
    <name type="ORF">ebA5548</name>
</gene>
<sequence length="602" mass="66771">MTAPDAPFDARAFLRTVPEEPGVYRMIGADERVLYVGKAKNLKRRVSSYFQRTQPSPRIAMMVAQILRVDITPTRSEAEALLLENNLIKSLAPRYNILFRDDKTYPYIELSGDEFPRLAYHRGAFTKGARYFGPFPNVWAVRESIHLLQKTFRLRTCENPVFQNRSRPCLLHQIKRCTAPCVGLIDKEAYAADVRLAARFLEGRASEVIDDLTARMHAAAERLAFEEAAACRDQVRVLQAVLARQFVDSRKDEDVDIIAAVEEGSVTCVNIAMVRGGRHLGDRPQFPSATAGIGMLDAALAFIEQHYREHELPAKLLVDVPLAPVRVLMDEICDKPCTLLVPRLQAEKVWMGMAENNARLAIIARARDTGRAEMRLEALRETLDLAEAPRRIECFDISHTMGEATVASCVVSVDGAMKNSEYRRYNITGITPGDDFAAMRQVLERRYGKVAAGEGVCPDLILIDGGKGQVSSARSVLADVGLESIAMVGVAKGEERKPGLETLVFPDGRMQNLAIDHPALHLIQEIRDEAHRFAITGHRARRAKARIGSRLEDIPGIGPMRRRNLLASFGGLDGVRAATVEDLCRVGGVSRKTAEAIYNALH</sequence>
<accession>Q5P080</accession>
<comment type="function">
    <text evidence="1">The UvrABC repair system catalyzes the recognition and processing of DNA lesions. UvrC both incises the 5' and 3' sides of the lesion. The N-terminal half is responsible for the 3' incision and the C-terminal half is responsible for the 5' incision.</text>
</comment>
<comment type="subunit">
    <text evidence="1">Interacts with UvrB in an incision complex.</text>
</comment>
<comment type="subcellular location">
    <subcellularLocation>
        <location evidence="1">Cytoplasm</location>
    </subcellularLocation>
</comment>
<comment type="similarity">
    <text evidence="1">Belongs to the UvrC family.</text>
</comment>
<reference key="1">
    <citation type="journal article" date="2005" name="Arch. Microbiol.">
        <title>The genome sequence of an anaerobic aromatic-degrading denitrifying bacterium, strain EbN1.</title>
        <authorList>
            <person name="Rabus R."/>
            <person name="Kube M."/>
            <person name="Heider J."/>
            <person name="Beck A."/>
            <person name="Heitmann K."/>
            <person name="Widdel F."/>
            <person name="Reinhardt R."/>
        </authorList>
    </citation>
    <scope>NUCLEOTIDE SEQUENCE [LARGE SCALE GENOMIC DNA]</scope>
    <source>
        <strain>DSM 19018 / LMG 30748 / EbN1</strain>
    </source>
</reference>
<proteinExistence type="inferred from homology"/>
<feature type="chain" id="PRO_0000227392" description="UvrABC system protein C">
    <location>
        <begin position="1"/>
        <end position="602"/>
    </location>
</feature>
<feature type="domain" description="GIY-YIG" evidence="1">
    <location>
        <begin position="19"/>
        <end position="97"/>
    </location>
</feature>
<feature type="domain" description="UVR" evidence="1">
    <location>
        <begin position="206"/>
        <end position="241"/>
    </location>
</feature>
<protein>
    <recommendedName>
        <fullName evidence="1">UvrABC system protein C</fullName>
        <shortName evidence="1">Protein UvrC</shortName>
    </recommendedName>
    <alternativeName>
        <fullName evidence="1">Excinuclease ABC subunit C</fullName>
    </alternativeName>
</protein>
<dbReference type="EMBL" id="CR555306">
    <property type="protein sequence ID" value="CAI09284.1"/>
    <property type="molecule type" value="Genomic_DNA"/>
</dbReference>
<dbReference type="RefSeq" id="WP_011238954.1">
    <property type="nucleotide sequence ID" value="NC_006513.1"/>
</dbReference>
<dbReference type="SMR" id="Q5P080"/>
<dbReference type="STRING" id="76114.ebA5548"/>
<dbReference type="KEGG" id="eba:ebA5548"/>
<dbReference type="eggNOG" id="COG0322">
    <property type="taxonomic scope" value="Bacteria"/>
</dbReference>
<dbReference type="HOGENOM" id="CLU_014841_3_0_4"/>
<dbReference type="OrthoDB" id="9804933at2"/>
<dbReference type="Proteomes" id="UP000006552">
    <property type="component" value="Chromosome"/>
</dbReference>
<dbReference type="GO" id="GO:0005737">
    <property type="term" value="C:cytoplasm"/>
    <property type="evidence" value="ECO:0007669"/>
    <property type="project" value="UniProtKB-SubCell"/>
</dbReference>
<dbReference type="GO" id="GO:0009380">
    <property type="term" value="C:excinuclease repair complex"/>
    <property type="evidence" value="ECO:0007669"/>
    <property type="project" value="InterPro"/>
</dbReference>
<dbReference type="GO" id="GO:0003677">
    <property type="term" value="F:DNA binding"/>
    <property type="evidence" value="ECO:0007669"/>
    <property type="project" value="UniProtKB-UniRule"/>
</dbReference>
<dbReference type="GO" id="GO:0009381">
    <property type="term" value="F:excinuclease ABC activity"/>
    <property type="evidence" value="ECO:0007669"/>
    <property type="project" value="UniProtKB-UniRule"/>
</dbReference>
<dbReference type="GO" id="GO:0006289">
    <property type="term" value="P:nucleotide-excision repair"/>
    <property type="evidence" value="ECO:0007669"/>
    <property type="project" value="UniProtKB-UniRule"/>
</dbReference>
<dbReference type="GO" id="GO:0009432">
    <property type="term" value="P:SOS response"/>
    <property type="evidence" value="ECO:0007669"/>
    <property type="project" value="UniProtKB-UniRule"/>
</dbReference>
<dbReference type="CDD" id="cd10434">
    <property type="entry name" value="GIY-YIG_UvrC_Cho"/>
    <property type="match status" value="1"/>
</dbReference>
<dbReference type="FunFam" id="3.30.420.340:FF:000001">
    <property type="entry name" value="UvrABC system protein C"/>
    <property type="match status" value="1"/>
</dbReference>
<dbReference type="FunFam" id="3.40.1440.10:FF:000001">
    <property type="entry name" value="UvrABC system protein C"/>
    <property type="match status" value="1"/>
</dbReference>
<dbReference type="Gene3D" id="1.10.150.20">
    <property type="entry name" value="5' to 3' exonuclease, C-terminal subdomain"/>
    <property type="match status" value="1"/>
</dbReference>
<dbReference type="Gene3D" id="3.40.1440.10">
    <property type="entry name" value="GIY-YIG endonuclease"/>
    <property type="match status" value="1"/>
</dbReference>
<dbReference type="Gene3D" id="4.10.860.10">
    <property type="entry name" value="UVR domain"/>
    <property type="match status" value="1"/>
</dbReference>
<dbReference type="Gene3D" id="3.30.420.340">
    <property type="entry name" value="UvrC, RNAse H endonuclease domain"/>
    <property type="match status" value="1"/>
</dbReference>
<dbReference type="HAMAP" id="MF_00203">
    <property type="entry name" value="UvrC"/>
    <property type="match status" value="1"/>
</dbReference>
<dbReference type="InterPro" id="IPR000305">
    <property type="entry name" value="GIY-YIG_endonuc"/>
</dbReference>
<dbReference type="InterPro" id="IPR035901">
    <property type="entry name" value="GIY-YIG_endonuc_sf"/>
</dbReference>
<dbReference type="InterPro" id="IPR047296">
    <property type="entry name" value="GIY-YIG_UvrC_Cho"/>
</dbReference>
<dbReference type="InterPro" id="IPR003583">
    <property type="entry name" value="Hlx-hairpin-Hlx_DNA-bd_motif"/>
</dbReference>
<dbReference type="InterPro" id="IPR010994">
    <property type="entry name" value="RuvA_2-like"/>
</dbReference>
<dbReference type="InterPro" id="IPR001943">
    <property type="entry name" value="UVR_dom"/>
</dbReference>
<dbReference type="InterPro" id="IPR036876">
    <property type="entry name" value="UVR_dom_sf"/>
</dbReference>
<dbReference type="InterPro" id="IPR050066">
    <property type="entry name" value="UvrABC_protein_C"/>
</dbReference>
<dbReference type="InterPro" id="IPR004791">
    <property type="entry name" value="UvrC"/>
</dbReference>
<dbReference type="InterPro" id="IPR001162">
    <property type="entry name" value="UvrC_RNase_H_dom"/>
</dbReference>
<dbReference type="InterPro" id="IPR038476">
    <property type="entry name" value="UvrC_RNase_H_dom_sf"/>
</dbReference>
<dbReference type="NCBIfam" id="NF001824">
    <property type="entry name" value="PRK00558.1-5"/>
    <property type="match status" value="1"/>
</dbReference>
<dbReference type="NCBIfam" id="TIGR00194">
    <property type="entry name" value="uvrC"/>
    <property type="match status" value="1"/>
</dbReference>
<dbReference type="PANTHER" id="PTHR30562:SF1">
    <property type="entry name" value="UVRABC SYSTEM PROTEIN C"/>
    <property type="match status" value="1"/>
</dbReference>
<dbReference type="PANTHER" id="PTHR30562">
    <property type="entry name" value="UVRC/OXIDOREDUCTASE"/>
    <property type="match status" value="1"/>
</dbReference>
<dbReference type="Pfam" id="PF01541">
    <property type="entry name" value="GIY-YIG"/>
    <property type="match status" value="1"/>
</dbReference>
<dbReference type="Pfam" id="PF14520">
    <property type="entry name" value="HHH_5"/>
    <property type="match status" value="1"/>
</dbReference>
<dbReference type="Pfam" id="PF02151">
    <property type="entry name" value="UVR"/>
    <property type="match status" value="1"/>
</dbReference>
<dbReference type="Pfam" id="PF22920">
    <property type="entry name" value="UvrC_RNaseH"/>
    <property type="match status" value="1"/>
</dbReference>
<dbReference type="Pfam" id="PF08459">
    <property type="entry name" value="UvrC_RNaseH_dom"/>
    <property type="match status" value="1"/>
</dbReference>
<dbReference type="SMART" id="SM00465">
    <property type="entry name" value="GIYc"/>
    <property type="match status" value="1"/>
</dbReference>
<dbReference type="SMART" id="SM00278">
    <property type="entry name" value="HhH1"/>
    <property type="match status" value="2"/>
</dbReference>
<dbReference type="SUPFAM" id="SSF46600">
    <property type="entry name" value="C-terminal UvrC-binding domain of UvrB"/>
    <property type="match status" value="1"/>
</dbReference>
<dbReference type="SUPFAM" id="SSF82771">
    <property type="entry name" value="GIY-YIG endonuclease"/>
    <property type="match status" value="1"/>
</dbReference>
<dbReference type="SUPFAM" id="SSF47781">
    <property type="entry name" value="RuvA domain 2-like"/>
    <property type="match status" value="1"/>
</dbReference>
<dbReference type="PROSITE" id="PS50164">
    <property type="entry name" value="GIY_YIG"/>
    <property type="match status" value="1"/>
</dbReference>
<dbReference type="PROSITE" id="PS50151">
    <property type="entry name" value="UVR"/>
    <property type="match status" value="1"/>
</dbReference>
<dbReference type="PROSITE" id="PS50165">
    <property type="entry name" value="UVRC"/>
    <property type="match status" value="1"/>
</dbReference>